<sequence>MSCACQDGVCNGKMDKATKTVGAETHAYSKTSSNTSIHESDDDDIWGDDEPTQTPAVKRIHTKQGYVDGLAHAQESSLQAGFDEGYGTGAGLGVAVGSILAKTWGTPAYDEARRELVITNVLSRQWFDNDLCMKKHALIQKWNQNLD</sequence>
<feature type="chain" id="PRO_0000324432" description="Protein YAE1">
    <location>
        <begin position="1"/>
        <end position="147"/>
    </location>
</feature>
<feature type="region of interest" description="Disordered" evidence="3">
    <location>
        <begin position="28"/>
        <end position="53"/>
    </location>
</feature>
<feature type="region of interest" description="deca-GX3 motif; required for interaction with LTO1" evidence="1">
    <location>
        <begin position="65"/>
        <end position="105"/>
    </location>
</feature>
<feature type="compositionally biased region" description="Polar residues" evidence="3">
    <location>
        <begin position="28"/>
        <end position="37"/>
    </location>
</feature>
<feature type="compositionally biased region" description="Acidic residues" evidence="3">
    <location>
        <begin position="40"/>
        <end position="51"/>
    </location>
</feature>
<organism>
    <name type="scientific">Meyerozyma guilliermondii (strain ATCC 6260 / CBS 566 / DSM 6381 / JCM 1539 / NBRC 10279 / NRRL Y-324)</name>
    <name type="common">Yeast</name>
    <name type="synonym">Candida guilliermondii</name>
    <dbReference type="NCBI Taxonomy" id="294746"/>
    <lineage>
        <taxon>Eukaryota</taxon>
        <taxon>Fungi</taxon>
        <taxon>Dikarya</taxon>
        <taxon>Ascomycota</taxon>
        <taxon>Saccharomycotina</taxon>
        <taxon>Pichiomycetes</taxon>
        <taxon>Debaryomycetaceae</taxon>
        <taxon>Meyerozyma</taxon>
    </lineage>
</organism>
<gene>
    <name type="primary">YAE1</name>
    <name type="ORF">PGUG_04185</name>
</gene>
<accession>A5DLN4</accession>
<evidence type="ECO:0000250" key="1">
    <source>
        <dbReference type="UniProtKB" id="P47118"/>
    </source>
</evidence>
<evidence type="ECO:0000250" key="2">
    <source>
        <dbReference type="UniProtKB" id="Q9NRH1"/>
    </source>
</evidence>
<evidence type="ECO:0000256" key="3">
    <source>
        <dbReference type="SAM" id="MobiDB-lite"/>
    </source>
</evidence>
<evidence type="ECO:0000305" key="4"/>
<dbReference type="EMBL" id="CH408159">
    <property type="protein sequence ID" value="EDK40087.2"/>
    <property type="molecule type" value="Genomic_DNA"/>
</dbReference>
<dbReference type="RefSeq" id="XP_001483456.1">
    <property type="nucleotide sequence ID" value="XM_001483406.1"/>
</dbReference>
<dbReference type="FunCoup" id="A5DLN4">
    <property type="interactions" value="6"/>
</dbReference>
<dbReference type="STRING" id="294746.A5DLN4"/>
<dbReference type="GeneID" id="5125277"/>
<dbReference type="KEGG" id="pgu:PGUG_04185"/>
<dbReference type="VEuPathDB" id="FungiDB:PGUG_04185"/>
<dbReference type="eggNOG" id="KOG4774">
    <property type="taxonomic scope" value="Eukaryota"/>
</dbReference>
<dbReference type="HOGENOM" id="CLU_066684_2_0_1"/>
<dbReference type="InParanoid" id="A5DLN4"/>
<dbReference type="OMA" id="WEGHSIN"/>
<dbReference type="OrthoDB" id="20086at2759"/>
<dbReference type="Proteomes" id="UP000001997">
    <property type="component" value="Unassembled WGS sequence"/>
</dbReference>
<dbReference type="GO" id="GO:0005737">
    <property type="term" value="C:cytoplasm"/>
    <property type="evidence" value="ECO:0007669"/>
    <property type="project" value="UniProtKB-SubCell"/>
</dbReference>
<dbReference type="GO" id="GO:0005634">
    <property type="term" value="C:nucleus"/>
    <property type="evidence" value="ECO:0007669"/>
    <property type="project" value="UniProtKB-SubCell"/>
</dbReference>
<dbReference type="GO" id="GO:0051604">
    <property type="term" value="P:protein maturation"/>
    <property type="evidence" value="ECO:0000250"/>
    <property type="project" value="UniProtKB"/>
</dbReference>
<dbReference type="InterPro" id="IPR019191">
    <property type="entry name" value="Essential_protein_Yae1_N"/>
</dbReference>
<dbReference type="InterPro" id="IPR038881">
    <property type="entry name" value="Yae1-like"/>
</dbReference>
<dbReference type="PANTHER" id="PTHR18829">
    <property type="entry name" value="PROTEIN YAE1 HOMOLOG"/>
    <property type="match status" value="1"/>
</dbReference>
<dbReference type="PANTHER" id="PTHR18829:SF0">
    <property type="entry name" value="PROTEIN YAE1 HOMOLOG"/>
    <property type="match status" value="1"/>
</dbReference>
<dbReference type="Pfam" id="PF09811">
    <property type="entry name" value="Yae1_N"/>
    <property type="match status" value="1"/>
</dbReference>
<reference key="1">
    <citation type="journal article" date="2009" name="Nature">
        <title>Evolution of pathogenicity and sexual reproduction in eight Candida genomes.</title>
        <authorList>
            <person name="Butler G."/>
            <person name="Rasmussen M.D."/>
            <person name="Lin M.F."/>
            <person name="Santos M.A.S."/>
            <person name="Sakthikumar S."/>
            <person name="Munro C.A."/>
            <person name="Rheinbay E."/>
            <person name="Grabherr M."/>
            <person name="Forche A."/>
            <person name="Reedy J.L."/>
            <person name="Agrafioti I."/>
            <person name="Arnaud M.B."/>
            <person name="Bates S."/>
            <person name="Brown A.J.P."/>
            <person name="Brunke S."/>
            <person name="Costanzo M.C."/>
            <person name="Fitzpatrick D.A."/>
            <person name="de Groot P.W.J."/>
            <person name="Harris D."/>
            <person name="Hoyer L.L."/>
            <person name="Hube B."/>
            <person name="Klis F.M."/>
            <person name="Kodira C."/>
            <person name="Lennard N."/>
            <person name="Logue M.E."/>
            <person name="Martin R."/>
            <person name="Neiman A.M."/>
            <person name="Nikolaou E."/>
            <person name="Quail M.A."/>
            <person name="Quinn J."/>
            <person name="Santos M.C."/>
            <person name="Schmitzberger F.F."/>
            <person name="Sherlock G."/>
            <person name="Shah P."/>
            <person name="Silverstein K.A.T."/>
            <person name="Skrzypek M.S."/>
            <person name="Soll D."/>
            <person name="Staggs R."/>
            <person name="Stansfield I."/>
            <person name="Stumpf M.P.H."/>
            <person name="Sudbery P.E."/>
            <person name="Srikantha T."/>
            <person name="Zeng Q."/>
            <person name="Berman J."/>
            <person name="Berriman M."/>
            <person name="Heitman J."/>
            <person name="Gow N.A.R."/>
            <person name="Lorenz M.C."/>
            <person name="Birren B.W."/>
            <person name="Kellis M."/>
            <person name="Cuomo C.A."/>
        </authorList>
    </citation>
    <scope>NUCLEOTIDE SEQUENCE [LARGE SCALE GENOMIC DNA]</scope>
    <source>
        <strain>ATCC 6260 / CBS 566 / DSM 6381 / JCM 1539 / NBRC 10279 / NRRL Y-324</strain>
    </source>
</reference>
<name>YAE1_PICGU</name>
<protein>
    <recommendedName>
        <fullName>Protein YAE1</fullName>
    </recommendedName>
</protein>
<keyword id="KW-0963">Cytoplasm</keyword>
<keyword id="KW-0539">Nucleus</keyword>
<keyword id="KW-1185">Reference proteome</keyword>
<comment type="function">
    <text evidence="2">The complex LTO1:YAE1 may function as a target specific adapter that probably recruits apo-RPLI1 to the cytosolic iron-sulfur protein assembly (CIA) complex machinery. May be required for biogenesis of the large ribosomal subunit and initiation of translation.</text>
</comment>
<comment type="subunit">
    <text evidence="2">May form a complex with LTO1.</text>
</comment>
<comment type="subcellular location">
    <subcellularLocation>
        <location evidence="1">Cytoplasm</location>
    </subcellularLocation>
    <subcellularLocation>
        <location evidence="1">Nucleus</location>
    </subcellularLocation>
</comment>
<comment type="similarity">
    <text evidence="4">Belongs to the YAE1 family.</text>
</comment>
<proteinExistence type="inferred from homology"/>